<comment type="function">
    <text evidence="1">Modulates cell-to-cell trafficking.</text>
</comment>
<comment type="subunit">
    <text evidence="12">(Microbial infection) Interacts with Grapevine fanleaf virus (GFLV) 2B-MP.</text>
</comment>
<comment type="subcellular location">
    <subcellularLocation>
        <location evidence="1">Cell membrane</location>
        <topology evidence="1">Single-pass type I membrane protein</topology>
    </subcellularLocation>
    <subcellularLocation>
        <location evidence="7 8">Cell junction</location>
        <location evidence="7 8">Plasmodesma</location>
    </subcellularLocation>
    <text evidence="7">Co-localizes with the Grapevine fanleaf virus (GFLV) 2B-MP at the base of tubules within modified plasmodesmata.</text>
</comment>
<comment type="tissue specificity">
    <text evidence="6">Highly expressed in inflorescence shoot apex. Uniformly expressed within the inflorescence meristem with the exception of a boundary zone between floral primordia and the meristem where the expression is weaker (at protein level).</text>
</comment>
<comment type="disruption phenotype">
    <text evidence="5 6 7">Grows normally showing no detectable abnormalities in leaf or flower development under short or long day growth conditions. The pdlp2 and pdlp3 double mutant shows altered protein diffusion (measured using GFP). In pdlp1, pdlp2 and pdlp3 triple mutant there is inhibition of GFLV 2BMP tubule formation. Virus cell-to-cell movement is negatively affected. There is a 22% reduction in mean surface area of infection foci by GFLV and an approximately 12 hour delay in long distance movement in comparison to wild-type plants. There is also a systemic delay in Cauliflower mosaic virus (CaMV) spread.</text>
</comment>
<comment type="similarity">
    <text evidence="11">Belongs to the cysteine-rich repeat secretory protein family. Plasmodesmata-located proteins (PDLD) subfamily.</text>
</comment>
<comment type="caution">
    <text evidence="11">PDLPs were initially named Cysteine-rich secretory proteins based on a classification work that failed to predict the transmembrane region at the C-terminus (PubMed:11402176). However, it was later shown that PDLPs are membrane proteins.</text>
</comment>
<comment type="sequence caution" evidence="11">
    <conflict type="erroneous gene model prediction">
        <sequence resource="EMBL-CDS" id="AAB70422"/>
    </conflict>
</comment>
<protein>
    <recommendedName>
        <fullName>Plasmodesmata-located protein 2</fullName>
        <shortName evidence="10">PD-located protein 2</shortName>
    </recommendedName>
    <alternativeName>
        <fullName evidence="9">Cysteine-rich repeat secretory protein 3</fullName>
    </alternativeName>
</protein>
<dbReference type="EMBL" id="AC000104">
    <property type="protein sequence ID" value="AAB70422.1"/>
    <property type="status" value="ALT_SEQ"/>
    <property type="molecule type" value="Genomic_DNA"/>
</dbReference>
<dbReference type="EMBL" id="CP002684">
    <property type="protein sequence ID" value="AEE27709.1"/>
    <property type="molecule type" value="Genomic_DNA"/>
</dbReference>
<dbReference type="EMBL" id="BT010866">
    <property type="protein sequence ID" value="AAR24233.1"/>
    <property type="molecule type" value="mRNA"/>
</dbReference>
<dbReference type="EMBL" id="BT011789">
    <property type="protein sequence ID" value="AAS68113.1"/>
    <property type="molecule type" value="mRNA"/>
</dbReference>
<dbReference type="PIR" id="F86177">
    <property type="entry name" value="F86177"/>
</dbReference>
<dbReference type="RefSeq" id="NP_171946.2">
    <property type="nucleotide sequence ID" value="NM_100331.4"/>
</dbReference>
<dbReference type="SMR" id="Q6NM73"/>
<dbReference type="FunCoup" id="Q6NM73">
    <property type="interactions" value="390"/>
</dbReference>
<dbReference type="STRING" id="3702.Q6NM73"/>
<dbReference type="TCDB" id="1.I.2.1.1">
    <property type="family name" value="the plant plasmodesmata (ppd) family"/>
</dbReference>
<dbReference type="PaxDb" id="3702-AT1G04520.1"/>
<dbReference type="ProteomicsDB" id="220315"/>
<dbReference type="EnsemblPlants" id="AT1G04520.1">
    <property type="protein sequence ID" value="AT1G04520.1"/>
    <property type="gene ID" value="AT1G04520"/>
</dbReference>
<dbReference type="GeneID" id="839502"/>
<dbReference type="Gramene" id="AT1G04520.1">
    <property type="protein sequence ID" value="AT1G04520.1"/>
    <property type="gene ID" value="AT1G04520"/>
</dbReference>
<dbReference type="KEGG" id="ath:AT1G04520"/>
<dbReference type="Araport" id="AT1G04520"/>
<dbReference type="TAIR" id="AT1G04520">
    <property type="gene designation" value="PDLP2"/>
</dbReference>
<dbReference type="eggNOG" id="ENOG502QUWZ">
    <property type="taxonomic scope" value="Eukaryota"/>
</dbReference>
<dbReference type="HOGENOM" id="CLU_000288_33_1_1"/>
<dbReference type="InParanoid" id="Q6NM73"/>
<dbReference type="OMA" id="YLEKCYI"/>
<dbReference type="PhylomeDB" id="Q6NM73"/>
<dbReference type="PRO" id="PR:Q6NM73"/>
<dbReference type="Proteomes" id="UP000006548">
    <property type="component" value="Chromosome 1"/>
</dbReference>
<dbReference type="ExpressionAtlas" id="Q6NM73">
    <property type="expression patterns" value="baseline and differential"/>
</dbReference>
<dbReference type="GO" id="GO:0005886">
    <property type="term" value="C:plasma membrane"/>
    <property type="evidence" value="ECO:0007669"/>
    <property type="project" value="UniProtKB-SubCell"/>
</dbReference>
<dbReference type="GO" id="GO:0009506">
    <property type="term" value="C:plasmodesma"/>
    <property type="evidence" value="ECO:0000314"/>
    <property type="project" value="TAIR"/>
</dbReference>
<dbReference type="GO" id="GO:0010497">
    <property type="term" value="P:plasmodesmata-mediated intercellular transport"/>
    <property type="evidence" value="ECO:0000316"/>
    <property type="project" value="TAIR"/>
</dbReference>
<dbReference type="GO" id="GO:0046739">
    <property type="term" value="P:transport of virus in multicellular host"/>
    <property type="evidence" value="ECO:0000316"/>
    <property type="project" value="TAIR"/>
</dbReference>
<dbReference type="CDD" id="cd23509">
    <property type="entry name" value="Gnk2-like"/>
    <property type="match status" value="2"/>
</dbReference>
<dbReference type="FunFam" id="3.30.430.20:FF:000001">
    <property type="entry name" value="cysteine-rich repeat secretory protein 3"/>
    <property type="match status" value="1"/>
</dbReference>
<dbReference type="FunFam" id="3.30.430.20:FF:000008">
    <property type="entry name" value="cysteine-rich repeat secretory protein 3"/>
    <property type="match status" value="1"/>
</dbReference>
<dbReference type="Gene3D" id="3.30.430.20">
    <property type="entry name" value="Gnk2 domain, C-X8-C-X2-C motif"/>
    <property type="match status" value="2"/>
</dbReference>
<dbReference type="InterPro" id="IPR051378">
    <property type="entry name" value="Cell2Cell_Antifungal"/>
</dbReference>
<dbReference type="InterPro" id="IPR002902">
    <property type="entry name" value="GNK2"/>
</dbReference>
<dbReference type="InterPro" id="IPR038408">
    <property type="entry name" value="GNK2_sf"/>
</dbReference>
<dbReference type="PANTHER" id="PTHR32080">
    <property type="entry name" value="ANTIFUNGAL PROTEIN GINKBILOBIN-2-LIKE"/>
    <property type="match status" value="1"/>
</dbReference>
<dbReference type="PANTHER" id="PTHR32080:SF24">
    <property type="entry name" value="PLASMODESMATA-LOCATED PROTEIN 2"/>
    <property type="match status" value="1"/>
</dbReference>
<dbReference type="Pfam" id="PF01657">
    <property type="entry name" value="Stress-antifung"/>
    <property type="match status" value="2"/>
</dbReference>
<dbReference type="PROSITE" id="PS51473">
    <property type="entry name" value="GNK2"/>
    <property type="match status" value="2"/>
</dbReference>
<gene>
    <name evidence="10" type="primary">PDLP2</name>
    <name evidence="9" type="synonym">CRRSP3</name>
    <name type="ordered locus">At1g04520</name>
    <name type="ORF">F19P19.1</name>
</gene>
<name>PDLP2_ARATH</name>
<organism>
    <name type="scientific">Arabidopsis thaliana</name>
    <name type="common">Mouse-ear cress</name>
    <dbReference type="NCBI Taxonomy" id="3702"/>
    <lineage>
        <taxon>Eukaryota</taxon>
        <taxon>Viridiplantae</taxon>
        <taxon>Streptophyta</taxon>
        <taxon>Embryophyta</taxon>
        <taxon>Tracheophyta</taxon>
        <taxon>Spermatophyta</taxon>
        <taxon>Magnoliopsida</taxon>
        <taxon>eudicotyledons</taxon>
        <taxon>Gunneridae</taxon>
        <taxon>Pentapetalae</taxon>
        <taxon>rosids</taxon>
        <taxon>malvids</taxon>
        <taxon>Brassicales</taxon>
        <taxon>Brassicaceae</taxon>
        <taxon>Camelineae</taxon>
        <taxon>Arabidopsis</taxon>
    </lineage>
</organism>
<accession>Q6NM73</accession>
<accession>P93806</accession>
<accession>P93807</accession>
<proteinExistence type="evidence at protein level"/>
<reference key="1">
    <citation type="journal article" date="2000" name="Nature">
        <title>Sequence and analysis of chromosome 1 of the plant Arabidopsis thaliana.</title>
        <authorList>
            <person name="Theologis A."/>
            <person name="Ecker J.R."/>
            <person name="Palm C.J."/>
            <person name="Federspiel N.A."/>
            <person name="Kaul S."/>
            <person name="White O."/>
            <person name="Alonso J."/>
            <person name="Altafi H."/>
            <person name="Araujo R."/>
            <person name="Bowman C.L."/>
            <person name="Brooks S.Y."/>
            <person name="Buehler E."/>
            <person name="Chan A."/>
            <person name="Chao Q."/>
            <person name="Chen H."/>
            <person name="Cheuk R.F."/>
            <person name="Chin C.W."/>
            <person name="Chung M.K."/>
            <person name="Conn L."/>
            <person name="Conway A.B."/>
            <person name="Conway A.R."/>
            <person name="Creasy T.H."/>
            <person name="Dewar K."/>
            <person name="Dunn P."/>
            <person name="Etgu P."/>
            <person name="Feldblyum T.V."/>
            <person name="Feng J.-D."/>
            <person name="Fong B."/>
            <person name="Fujii C.Y."/>
            <person name="Gill J.E."/>
            <person name="Goldsmith A.D."/>
            <person name="Haas B."/>
            <person name="Hansen N.F."/>
            <person name="Hughes B."/>
            <person name="Huizar L."/>
            <person name="Hunter J.L."/>
            <person name="Jenkins J."/>
            <person name="Johnson-Hopson C."/>
            <person name="Khan S."/>
            <person name="Khaykin E."/>
            <person name="Kim C.J."/>
            <person name="Koo H.L."/>
            <person name="Kremenetskaia I."/>
            <person name="Kurtz D.B."/>
            <person name="Kwan A."/>
            <person name="Lam B."/>
            <person name="Langin-Hooper S."/>
            <person name="Lee A."/>
            <person name="Lee J.M."/>
            <person name="Lenz C.A."/>
            <person name="Li J.H."/>
            <person name="Li Y.-P."/>
            <person name="Lin X."/>
            <person name="Liu S.X."/>
            <person name="Liu Z.A."/>
            <person name="Luros J.S."/>
            <person name="Maiti R."/>
            <person name="Marziali A."/>
            <person name="Militscher J."/>
            <person name="Miranda M."/>
            <person name="Nguyen M."/>
            <person name="Nierman W.C."/>
            <person name="Osborne B.I."/>
            <person name="Pai G."/>
            <person name="Peterson J."/>
            <person name="Pham P.K."/>
            <person name="Rizzo M."/>
            <person name="Rooney T."/>
            <person name="Rowley D."/>
            <person name="Sakano H."/>
            <person name="Salzberg S.L."/>
            <person name="Schwartz J.R."/>
            <person name="Shinn P."/>
            <person name="Southwick A.M."/>
            <person name="Sun H."/>
            <person name="Tallon L.J."/>
            <person name="Tambunga G."/>
            <person name="Toriumi M.J."/>
            <person name="Town C.D."/>
            <person name="Utterback T."/>
            <person name="Van Aken S."/>
            <person name="Vaysberg M."/>
            <person name="Vysotskaia V.S."/>
            <person name="Walker M."/>
            <person name="Wu D."/>
            <person name="Yu G."/>
            <person name="Fraser C.M."/>
            <person name="Venter J.C."/>
            <person name="Davis R.W."/>
        </authorList>
    </citation>
    <scope>NUCLEOTIDE SEQUENCE [LARGE SCALE GENOMIC DNA]</scope>
    <source>
        <strain>cv. Columbia</strain>
    </source>
</reference>
<reference key="2">
    <citation type="journal article" date="2017" name="Plant J.">
        <title>Araport11: a complete reannotation of the Arabidopsis thaliana reference genome.</title>
        <authorList>
            <person name="Cheng C.Y."/>
            <person name="Krishnakumar V."/>
            <person name="Chan A.P."/>
            <person name="Thibaud-Nissen F."/>
            <person name="Schobel S."/>
            <person name="Town C.D."/>
        </authorList>
    </citation>
    <scope>GENOME REANNOTATION</scope>
    <source>
        <strain>cv. Columbia</strain>
    </source>
</reference>
<reference key="3">
    <citation type="submission" date="2004-03" db="EMBL/GenBank/DDBJ databases">
        <title>Arabidopsis ORF clones.</title>
        <authorList>
            <person name="Shinn P."/>
            <person name="Chen H."/>
            <person name="Cheuk R.F."/>
            <person name="Kim C.J."/>
            <person name="Ecker J.R."/>
        </authorList>
    </citation>
    <scope>NUCLEOTIDE SEQUENCE [LARGE SCALE MRNA]</scope>
    <source>
        <strain>cv. Columbia</strain>
    </source>
</reference>
<reference key="4">
    <citation type="journal article" date="2001" name="Plant Physiol.">
        <title>A superfamily of proteins with novel cysteine-rich repeats.</title>
        <authorList>
            <person name="Chen Z."/>
        </authorList>
    </citation>
    <scope>GENE FAMILY ORGANIZATION</scope>
    <scope>NOMENCLATURE</scope>
    <scope>CAUTION</scope>
</reference>
<reference key="5">
    <citation type="journal article" date="2008" name="Plant Signal. Behav.">
        <title>Symplastic domains in the Arabidopsis shoot apical meristem correlate with PDLP1 expression patterns.</title>
        <authorList>
            <person name="Bayer E."/>
            <person name="Thomas C."/>
            <person name="Maule A."/>
        </authorList>
    </citation>
    <scope>TISSUE SPECIFICITY</scope>
    <scope>DISRUPTION PHENOTYPE</scope>
</reference>
<reference key="6">
    <citation type="journal article" date="2008" name="PLoS Biol.">
        <title>Specific targeting of a plasmodesmal protein affecting cell-to-cell communication.</title>
        <authorList>
            <person name="Thomas C.L."/>
            <person name="Bayer E.M."/>
            <person name="Ritzenthaler C."/>
            <person name="Fernandez-Calvino L."/>
            <person name="Maule A.J."/>
        </authorList>
    </citation>
    <scope>DISRUPTION PHENOTYPE</scope>
</reference>
<reference key="7">
    <citation type="journal article" date="2010" name="PLoS Pathog.">
        <title>A family of plasmodesmal proteins with receptor-like properties for plant viral movement proteins.</title>
        <authorList>
            <person name="Amari K."/>
            <person name="Boutant E."/>
            <person name="Hofmann C."/>
            <person name="Schmitt-Keichinger C."/>
            <person name="Fernandez-Calvino L."/>
            <person name="Didier P."/>
            <person name="Lerich A."/>
            <person name="Mutterer J."/>
            <person name="Thomas C.L."/>
            <person name="Heinlein M."/>
            <person name="Mely Y."/>
            <person name="Maule A.J."/>
            <person name="Ritzenthaler C."/>
        </authorList>
    </citation>
    <scope>SUBCELLULAR LOCATION</scope>
    <scope>INTERACTION WITH GRAPEVINE FANLEAF VIRUS 2B-MP PROTEIN</scope>
    <scope>DISRUPTION PHENOTYPE</scope>
    <source>
        <strain>cv. Columbia</strain>
    </source>
</reference>
<reference key="8">
    <citation type="journal article" date="2014" name="PLoS Pathog.">
        <title>The plasmodesmal protein PDLP1 localises to haustoria-associated membranes during downy mildew infection and regulates callose deposition.</title>
        <authorList>
            <person name="Caillaud M.C."/>
            <person name="Wirthmueller L."/>
            <person name="Sklenar J."/>
            <person name="Findlay K."/>
            <person name="Piquerez S.J."/>
            <person name="Jones A.M."/>
            <person name="Robatzek S."/>
            <person name="Jones J.D."/>
            <person name="Faulkner C."/>
        </authorList>
    </citation>
    <scope>SUBCELLULAR LOCATION</scope>
    <source>
        <strain>cv. Columbia</strain>
    </source>
</reference>
<sequence>MGLSISFLSIIMMMCLLFPDLNVVVKSATTEYTTLIYKGCARQQFSDPSGLYSQALSAMFGSLVSQSTKTRFYKTTTGTSTTTITGLFQCRGDLSNHDCYNCVSRLPVLSDKLCGKTIASRVQLSGCYLLYEVSGFSQISGMEMLFKTCGKNNIAGTGFEERRDTAFGVMQNGVVSGHGFYATTYESVYVLGQCEGDVGDTDCSGCVKNALEKAQVECGSSISGQIYLHKCFIAYSYYPNGVPRRSSSSSSSSSSSSSGSSNSDPSTSTGATGKTVAIIVGGAAGVGFLVICLLFAKNLMRKKHDDY</sequence>
<keyword id="KW-0965">Cell junction</keyword>
<keyword id="KW-1003">Cell membrane</keyword>
<keyword id="KW-1015">Disulfide bond</keyword>
<keyword id="KW-0945">Host-virus interaction</keyword>
<keyword id="KW-0472">Membrane</keyword>
<keyword id="KW-1185">Reference proteome</keyword>
<keyword id="KW-0677">Repeat</keyword>
<keyword id="KW-0732">Signal</keyword>
<keyword id="KW-0812">Transmembrane</keyword>
<keyword id="KW-1133">Transmembrane helix</keyword>
<keyword id="KW-0813">Transport</keyword>
<feature type="signal peptide" evidence="2">
    <location>
        <begin position="1"/>
        <end position="23"/>
    </location>
</feature>
<feature type="chain" id="PRO_0000296131" description="Plasmodesmata-located protein 2">
    <location>
        <begin position="24"/>
        <end position="307"/>
    </location>
</feature>
<feature type="topological domain" description="Extracellular" evidence="1">
    <location>
        <begin position="24"/>
        <end position="275"/>
    </location>
</feature>
<feature type="transmembrane region" description="Helical" evidence="2">
    <location>
        <begin position="276"/>
        <end position="296"/>
    </location>
</feature>
<feature type="topological domain" description="Cytoplasmic" evidence="1">
    <location>
        <begin position="297"/>
        <end position="307"/>
    </location>
</feature>
<feature type="domain" description="Gnk2-homologous 1" evidence="3">
    <location>
        <begin position="33"/>
        <end position="136"/>
    </location>
</feature>
<feature type="domain" description="Gnk2-homologous 2" evidence="3">
    <location>
        <begin position="141"/>
        <end position="240"/>
    </location>
</feature>
<feature type="region of interest" description="Disordered" evidence="4">
    <location>
        <begin position="246"/>
        <end position="270"/>
    </location>
</feature>
<feature type="region of interest" description="Necessary and sufficient for plasmodesmal targeting" evidence="1">
    <location>
        <begin position="276"/>
        <end position="296"/>
    </location>
</feature>
<feature type="compositionally biased region" description="Low complexity" evidence="4">
    <location>
        <begin position="246"/>
        <end position="268"/>
    </location>
</feature>
<feature type="disulfide bond" evidence="3">
    <location>
        <begin position="40"/>
        <end position="114"/>
    </location>
</feature>
<feature type="disulfide bond" evidence="3">
    <location>
        <begin position="90"/>
        <end position="99"/>
    </location>
</feature>
<feature type="disulfide bond" evidence="3">
    <location>
        <begin position="102"/>
        <end position="127"/>
    </location>
</feature>
<feature type="disulfide bond" evidence="3">
    <location>
        <begin position="149"/>
        <end position="218"/>
    </location>
</feature>
<feature type="disulfide bond" evidence="3">
    <location>
        <begin position="194"/>
        <end position="203"/>
    </location>
</feature>
<feature type="disulfide bond" evidence="3">
    <location>
        <begin position="206"/>
        <end position="231"/>
    </location>
</feature>
<evidence type="ECO:0000250" key="1">
    <source>
        <dbReference type="UniProtKB" id="Q8GXV7"/>
    </source>
</evidence>
<evidence type="ECO:0000255" key="2"/>
<evidence type="ECO:0000255" key="3">
    <source>
        <dbReference type="PROSITE-ProRule" id="PRU00806"/>
    </source>
</evidence>
<evidence type="ECO:0000256" key="4">
    <source>
        <dbReference type="SAM" id="MobiDB-lite"/>
    </source>
</evidence>
<evidence type="ECO:0000269" key="5">
    <source>
    </source>
</evidence>
<evidence type="ECO:0000269" key="6">
    <source>
    </source>
</evidence>
<evidence type="ECO:0000269" key="7">
    <source>
    </source>
</evidence>
<evidence type="ECO:0000269" key="8">
    <source>
    </source>
</evidence>
<evidence type="ECO:0000303" key="9">
    <source>
    </source>
</evidence>
<evidence type="ECO:0000303" key="10">
    <source>
    </source>
</evidence>
<evidence type="ECO:0000305" key="11"/>
<evidence type="ECO:0000305" key="12">
    <source>
    </source>
</evidence>